<evidence type="ECO:0000250" key="1">
    <source>
        <dbReference type="UniProtKB" id="P26281"/>
    </source>
</evidence>
<evidence type="ECO:0000305" key="2"/>
<evidence type="ECO:0007829" key="3">
    <source>
        <dbReference type="PDB" id="1CBK"/>
    </source>
</evidence>
<dbReference type="EC" id="2.7.6.3" evidence="1"/>
<dbReference type="EMBL" id="L42023">
    <property type="protein sequence ID" value="AAC21742.1"/>
    <property type="molecule type" value="Genomic_DNA"/>
</dbReference>
<dbReference type="RefSeq" id="NP_438237.1">
    <property type="nucleotide sequence ID" value="NC_000907.1"/>
</dbReference>
<dbReference type="PDB" id="1CBK">
    <property type="method" value="X-ray"/>
    <property type="resolution" value="2.02 A"/>
    <property type="chains" value="A/B=1-160"/>
</dbReference>
<dbReference type="PDBsum" id="1CBK"/>
<dbReference type="SMR" id="P43777"/>
<dbReference type="STRING" id="71421.HI_0064"/>
<dbReference type="DrugBank" id="DB02278">
    <property type="generic name" value="7,8-dihydro-7,7-dimethyl-6-hydroxypterin"/>
</dbReference>
<dbReference type="EnsemblBacteria" id="AAC21742">
    <property type="protein sequence ID" value="AAC21742"/>
    <property type="gene ID" value="HI_0064"/>
</dbReference>
<dbReference type="KEGG" id="hin:HI_0064"/>
<dbReference type="PATRIC" id="fig|71421.8.peg.65"/>
<dbReference type="eggNOG" id="COG0801">
    <property type="taxonomic scope" value="Bacteria"/>
</dbReference>
<dbReference type="HOGENOM" id="CLU_097916_0_1_6"/>
<dbReference type="OrthoDB" id="9808041at2"/>
<dbReference type="PhylomeDB" id="P43777"/>
<dbReference type="BioCyc" id="HINF71421:G1GJ1-65-MONOMER"/>
<dbReference type="UniPathway" id="UPA00077">
    <property type="reaction ID" value="UER00155"/>
</dbReference>
<dbReference type="EvolutionaryTrace" id="P43777"/>
<dbReference type="Proteomes" id="UP000000579">
    <property type="component" value="Chromosome"/>
</dbReference>
<dbReference type="GO" id="GO:0003848">
    <property type="term" value="F:2-amino-4-hydroxy-6-hydroxymethyldihydropteridine diphosphokinase activity"/>
    <property type="evidence" value="ECO:0007669"/>
    <property type="project" value="UniProtKB-EC"/>
</dbReference>
<dbReference type="GO" id="GO:0005524">
    <property type="term" value="F:ATP binding"/>
    <property type="evidence" value="ECO:0007669"/>
    <property type="project" value="UniProtKB-KW"/>
</dbReference>
<dbReference type="GO" id="GO:0016301">
    <property type="term" value="F:kinase activity"/>
    <property type="evidence" value="ECO:0007669"/>
    <property type="project" value="UniProtKB-KW"/>
</dbReference>
<dbReference type="GO" id="GO:0046656">
    <property type="term" value="P:folic acid biosynthetic process"/>
    <property type="evidence" value="ECO:0007669"/>
    <property type="project" value="UniProtKB-KW"/>
</dbReference>
<dbReference type="GO" id="GO:0046654">
    <property type="term" value="P:tetrahydrofolate biosynthetic process"/>
    <property type="evidence" value="ECO:0007669"/>
    <property type="project" value="UniProtKB-UniPathway"/>
</dbReference>
<dbReference type="CDD" id="cd00483">
    <property type="entry name" value="HPPK"/>
    <property type="match status" value="1"/>
</dbReference>
<dbReference type="Gene3D" id="3.30.70.560">
    <property type="entry name" value="7,8-Dihydro-6-hydroxymethylpterin-pyrophosphokinase HPPK"/>
    <property type="match status" value="1"/>
</dbReference>
<dbReference type="InterPro" id="IPR000550">
    <property type="entry name" value="Hppk"/>
</dbReference>
<dbReference type="InterPro" id="IPR035907">
    <property type="entry name" value="Hppk_sf"/>
</dbReference>
<dbReference type="NCBIfam" id="TIGR01498">
    <property type="entry name" value="folK"/>
    <property type="match status" value="1"/>
</dbReference>
<dbReference type="PANTHER" id="PTHR43071">
    <property type="entry name" value="2-AMINO-4-HYDROXY-6-HYDROXYMETHYLDIHYDROPTERIDINE PYROPHOSPHOKINASE"/>
    <property type="match status" value="1"/>
</dbReference>
<dbReference type="PANTHER" id="PTHR43071:SF1">
    <property type="entry name" value="2-AMINO-4-HYDROXY-6-HYDROXYMETHYLDIHYDROPTERIDINE PYROPHOSPHOKINASE"/>
    <property type="match status" value="1"/>
</dbReference>
<dbReference type="Pfam" id="PF01288">
    <property type="entry name" value="HPPK"/>
    <property type="match status" value="1"/>
</dbReference>
<dbReference type="SUPFAM" id="SSF55083">
    <property type="entry name" value="6-hydroxymethyl-7,8-dihydropterin pyrophosphokinase, HPPK"/>
    <property type="match status" value="1"/>
</dbReference>
<dbReference type="PROSITE" id="PS00794">
    <property type="entry name" value="HPPK"/>
    <property type="match status" value="1"/>
</dbReference>
<gene>
    <name type="primary">folK</name>
    <name type="ordered locus">HI_0064</name>
</gene>
<sequence length="160" mass="18299">MITAYIALGSNLNTPVEQLHAALKAISQLSNTHLVTTSSFYKSKPLGPQDQPDYVNAVAKIETELSPLKLLDELQRIENEQGRVRLRRWGERTLDLDILLYGNEIIQNERLTIPHYDMHNREFVIVPLFEIASDLVLPNSQIITELVKQFADHKMIKLNP</sequence>
<organism>
    <name type="scientific">Haemophilus influenzae (strain ATCC 51907 / DSM 11121 / KW20 / Rd)</name>
    <dbReference type="NCBI Taxonomy" id="71421"/>
    <lineage>
        <taxon>Bacteria</taxon>
        <taxon>Pseudomonadati</taxon>
        <taxon>Pseudomonadota</taxon>
        <taxon>Gammaproteobacteria</taxon>
        <taxon>Pasteurellales</taxon>
        <taxon>Pasteurellaceae</taxon>
        <taxon>Haemophilus</taxon>
    </lineage>
</organism>
<feature type="chain" id="PRO_0000168250" description="2-amino-4-hydroxy-6-hydroxymethyldihydropteridine pyrophosphokinase">
    <location>
        <begin position="1"/>
        <end position="160"/>
    </location>
</feature>
<feature type="strand" evidence="3">
    <location>
        <begin position="2"/>
        <end position="10"/>
    </location>
</feature>
<feature type="helix" evidence="3">
    <location>
        <begin position="15"/>
        <end position="27"/>
    </location>
</feature>
<feature type="strand" evidence="3">
    <location>
        <begin position="32"/>
        <end position="37"/>
    </location>
</feature>
<feature type="strand" evidence="3">
    <location>
        <begin position="41"/>
        <end position="43"/>
    </location>
</feature>
<feature type="strand" evidence="3">
    <location>
        <begin position="49"/>
        <end position="51"/>
    </location>
</feature>
<feature type="strand" evidence="3">
    <location>
        <begin position="54"/>
        <end position="63"/>
    </location>
</feature>
<feature type="helix" evidence="3">
    <location>
        <begin position="67"/>
        <end position="80"/>
    </location>
</feature>
<feature type="strand" evidence="3">
    <location>
        <begin position="95"/>
        <end position="101"/>
    </location>
</feature>
<feature type="strand" evidence="3">
    <location>
        <begin position="106"/>
        <end position="110"/>
    </location>
</feature>
<feature type="strand" evidence="3">
    <location>
        <begin position="112"/>
        <end position="114"/>
    </location>
</feature>
<feature type="helix" evidence="3">
    <location>
        <begin position="116"/>
        <end position="120"/>
    </location>
</feature>
<feature type="helix" evidence="3">
    <location>
        <begin position="122"/>
        <end position="131"/>
    </location>
</feature>
<feature type="helix" evidence="3">
    <location>
        <begin position="143"/>
        <end position="146"/>
    </location>
</feature>
<feature type="helix" evidence="3">
    <location>
        <begin position="147"/>
        <end position="150"/>
    </location>
</feature>
<accession>P43777</accession>
<reference key="1">
    <citation type="journal article" date="1995" name="Science">
        <title>Whole-genome random sequencing and assembly of Haemophilus influenzae Rd.</title>
        <authorList>
            <person name="Fleischmann R.D."/>
            <person name="Adams M.D."/>
            <person name="White O."/>
            <person name="Clayton R.A."/>
            <person name="Kirkness E.F."/>
            <person name="Kerlavage A.R."/>
            <person name="Bult C.J."/>
            <person name="Tomb J.-F."/>
            <person name="Dougherty B.A."/>
            <person name="Merrick J.M."/>
            <person name="McKenney K."/>
            <person name="Sutton G.G."/>
            <person name="FitzHugh W."/>
            <person name="Fields C.A."/>
            <person name="Gocayne J.D."/>
            <person name="Scott J.D."/>
            <person name="Shirley R."/>
            <person name="Liu L.-I."/>
            <person name="Glodek A."/>
            <person name="Kelley J.M."/>
            <person name="Weidman J.F."/>
            <person name="Phillips C.A."/>
            <person name="Spriggs T."/>
            <person name="Hedblom E."/>
            <person name="Cotton M.D."/>
            <person name="Utterback T.R."/>
            <person name="Hanna M.C."/>
            <person name="Nguyen D.T."/>
            <person name="Saudek D.M."/>
            <person name="Brandon R.C."/>
            <person name="Fine L.D."/>
            <person name="Fritchman J.L."/>
            <person name="Fuhrmann J.L."/>
            <person name="Geoghagen N.S.M."/>
            <person name="Gnehm C.L."/>
            <person name="McDonald L.A."/>
            <person name="Small K.V."/>
            <person name="Fraser C.M."/>
            <person name="Smith H.O."/>
            <person name="Venter J.C."/>
        </authorList>
    </citation>
    <scope>NUCLEOTIDE SEQUENCE [LARGE SCALE GENOMIC DNA]</scope>
    <source>
        <strain>ATCC 51907 / DSM 11121 / KW20 / Rd</strain>
    </source>
</reference>
<reference key="2">
    <citation type="journal article" date="1999" name="J. Mol. Biol.">
        <title>The structure and function of the 6-hydroxymethyl-7,8-dihydropterin pyrophosphokinase from Haemophilus influenzae.</title>
        <authorList>
            <person name="Hennig M."/>
            <person name="Dale G.E."/>
            <person name="D'Arcy A."/>
            <person name="Danel F."/>
            <person name="Fischer S."/>
            <person name="Gray C.P."/>
            <person name="Jolidon S."/>
            <person name="Mueller F."/>
            <person name="Page M.G.P."/>
            <person name="Pattison P."/>
            <person name="Oefner C."/>
        </authorList>
    </citation>
    <scope>X-RAY CRYSTALLOGRAPHY (2.1 ANGSTROMS)</scope>
</reference>
<comment type="function">
    <text evidence="1">Catalyzes the transfer of pyrophosphate from adenosine triphosphate (ATP) to 6-hydroxymethyl-7,8-dihydropterin, an enzymatic step in folate biosynthesis pathway.</text>
</comment>
<comment type="catalytic activity">
    <reaction evidence="1">
        <text>6-hydroxymethyl-7,8-dihydropterin + ATP = (7,8-dihydropterin-6-yl)methyl diphosphate + AMP + H(+)</text>
        <dbReference type="Rhea" id="RHEA:11412"/>
        <dbReference type="ChEBI" id="CHEBI:15378"/>
        <dbReference type="ChEBI" id="CHEBI:30616"/>
        <dbReference type="ChEBI" id="CHEBI:44841"/>
        <dbReference type="ChEBI" id="CHEBI:72950"/>
        <dbReference type="ChEBI" id="CHEBI:456215"/>
        <dbReference type="EC" id="2.7.6.3"/>
    </reaction>
</comment>
<comment type="pathway">
    <text evidence="1">Cofactor biosynthesis; tetrahydrofolate biosynthesis; 2-amino-4-hydroxy-6-hydroxymethyl-7,8-dihydropteridine diphosphate from 7,8-dihydroneopterin triphosphate: step 4/4.</text>
</comment>
<comment type="subunit">
    <text evidence="1">Monomer.</text>
</comment>
<comment type="similarity">
    <text evidence="2">Belongs to the HPPK family.</text>
</comment>
<proteinExistence type="evidence at protein level"/>
<keyword id="KW-0002">3D-structure</keyword>
<keyword id="KW-0067">ATP-binding</keyword>
<keyword id="KW-0289">Folate biosynthesis</keyword>
<keyword id="KW-0418">Kinase</keyword>
<keyword id="KW-0547">Nucleotide-binding</keyword>
<keyword id="KW-1185">Reference proteome</keyword>
<keyword id="KW-0808">Transferase</keyword>
<protein>
    <recommendedName>
        <fullName evidence="1">2-amino-4-hydroxy-6-hydroxymethyldihydropteridine pyrophosphokinase</fullName>
        <ecNumber evidence="1">2.7.6.3</ecNumber>
    </recommendedName>
    <alternativeName>
        <fullName evidence="1">6-hydroxymethyl-7,8-dihydropterin pyrophosphokinase</fullName>
        <shortName evidence="1">PPPK</shortName>
    </alternativeName>
    <alternativeName>
        <fullName evidence="1">7,8-dihydro-6-hydroxymethylpterin-pyrophosphokinase</fullName>
        <shortName evidence="1">HPPK</shortName>
    </alternativeName>
</protein>
<name>HPPK_HAEIN</name>